<gene>
    <name evidence="3" type="ORF">G563DRAFT_02009</name>
</gene>
<evidence type="ECO:0000255" key="1"/>
<evidence type="ECO:0000269" key="2">
    <source>
    </source>
</evidence>
<evidence type="ECO:0000303" key="3">
    <source>
    </source>
</evidence>
<evidence type="ECO:0000305" key="4"/>
<evidence type="ECO:0000305" key="5">
    <source>
    </source>
</evidence>
<sequence>MSTLNNLTKTLTQQVDDGPISAVRLVKGYDNSYALNAAGQVTALSIGNSSLKKLVLGTEAQALEYLYLSGSESLKEVVFEVPLPHLTHLYLNNCAIKDITIPKGFRSLQQVYLQKNGLTELVFEGDCPALVLLDVSENQLKGLSFHSGFRALKYIYATNNVLQKITFNRSMRLLNTLHLAKNQLTELAPFLSEIETMETLYLQGNQLLRIDREIWDRDLNCWDTMKGYLTSLNKGNIIREYLHEAKMILIGNGEVGKTSIRLKLLDINAPLPDKKDRTPGLDIVPYTIANLSSAQTGLPASTSFTFNIWDFGGQGKYREIQQLFCSRKSLYLYVTAYDDTADYNELYVGYEYWLAMANAYNNDSGQHSPVIYVQNKNDMGEKPINEEEVKHKFGNVGAFIKISCVDKEQFTALPKLIVKSISKISEDIFTVQYNSEWLGVKEDLNELKNQGTNYISKEEFITICTERGLSEDEIRAWLTVLDRIGAVIYFGDNEKLKDWIVLNPIWVKDAICKVIDFEFYDDIATLKPSFLPKIWEEYSESEREKLLQLLISYHFCYKEEESFIVPALFTENQPKYPEHLSSFDCEIKLKYVSFLPAGTLHKFMVKLHDKIYNELRWKKGVVLQDGATNTYAEVTERWKEHSIYIRLKDKKGQHPLWQEIQKTLQELNEELKTTKLMQLDFEVYCFYNNKWKAKPDIEDLCELDSTNIFKFMFGLSSPVKEYISQKPTPLLGKAKLSIIFLTADPENKNPIGASVQKQRIENTISDAFEFYNNLETKYNEIGSNTVGKDIVHITVHGIPDQLFFVHDKHTDQSNPVQSDYLCKQLEKTKQVKKLIVLIACNSETTAKKIVDGGLTKYAIGTTIDISSKAAIDFSEKFYDLLKNSPLQIESVFEETCYELNQDKYRAKLDDGEFYDYSKVFKIFKKTT</sequence>
<feature type="chain" id="PRO_0000455579" description="Roc-COR-CHAT protease">
    <location>
        <begin position="1"/>
        <end position="927"/>
    </location>
</feature>
<feature type="repeat" description="LRR 1" evidence="1">
    <location>
        <begin position="38"/>
        <end position="61"/>
    </location>
</feature>
<feature type="repeat" description="LRR 2" evidence="1">
    <location>
        <begin position="83"/>
        <end position="107"/>
    </location>
</feature>
<feature type="repeat" description="LRR 3" evidence="1">
    <location>
        <begin position="109"/>
        <end position="125"/>
    </location>
</feature>
<feature type="repeat" description="LRR 4" evidence="1">
    <location>
        <begin position="127"/>
        <end position="151"/>
    </location>
</feature>
<feature type="repeat" description="LRR 6" evidence="1">
    <location>
        <begin position="171"/>
        <end position="194"/>
    </location>
</feature>
<feature type="repeat" description="LRR 7" evidence="1">
    <location>
        <begin position="195"/>
        <end position="217"/>
    </location>
</feature>
<feature type="domain" description="COR" evidence="1">
    <location>
        <begin position="436"/>
        <end position="623"/>
    </location>
</feature>
<feature type="region of interest" description="LRR 5" evidence="4">
    <location>
        <begin position="152"/>
        <end position="170"/>
    </location>
</feature>
<feature type="active site" evidence="5">
    <location>
        <position position="796"/>
    </location>
</feature>
<feature type="active site" evidence="5">
    <location>
        <position position="840"/>
    </location>
</feature>
<feature type="mutagenesis site" description="Protease-bGSDM pair no longer toxic in E.coli, protease does not cleave bGSDM, liposomes incubated with bGSDM do not leak." evidence="2">
    <original>H</original>
    <variation>A</variation>
    <location>
        <position position="796"/>
    </location>
</feature>
<feature type="mutagenesis site" description="Protease-bGSDM pair no longer toxic in E.coli, protease does not cleave bGSDM, liposomes incubated with bGSDM do not leak." evidence="2">
    <original>C</original>
    <variation>A</variation>
    <location>
        <position position="840"/>
    </location>
</feature>
<keyword id="KW-0051">Antiviral defense</keyword>
<keyword id="KW-0378">Hydrolase</keyword>
<keyword id="KW-0433">Leucine-rich repeat</keyword>
<keyword id="KW-0645">Protease</keyword>
<keyword id="KW-0677">Repeat</keyword>
<keyword id="KW-0720">Serine protease</keyword>
<reference key="1">
    <citation type="submission" date="2013-07" db="EMBL/GenBank/DDBJ databases">
        <authorList>
            <person name="Kyrpides N."/>
            <person name="Huntemann M."/>
            <person name="Han J."/>
            <person name="Chen A."/>
            <person name="Mavromatis K."/>
            <person name="Markowitz V."/>
            <person name="Palaniappan K."/>
            <person name="Ivanova N."/>
            <person name="Schaumberg A."/>
            <person name="Pati A."/>
            <person name="Liolios K."/>
            <person name="Nordberg H.P."/>
            <person name="Cantor M.N."/>
            <person name="Hua S.X."/>
            <person name="Woyke T."/>
        </authorList>
    </citation>
    <scope>NUCLEOTIDE SEQUENCE [LARGE SCALE GENOMIC DNA]</scope>
    <source>
        <strain>ATCC BAA-293 / DSM 19591 / LMG 21438 / NS12</strain>
    </source>
</reference>
<reference key="2">
    <citation type="journal article" date="2022" name="Science">
        <title>Bacterial gasdermins reveal an ancient mechanism of cell death.</title>
        <authorList>
            <person name="Johnson A.G."/>
            <person name="Wein T."/>
            <person name="Mayer M.L."/>
            <person name="Duncan-Lowey B."/>
            <person name="Yirmiya E."/>
            <person name="Oppenheimer-Shaanan Y."/>
            <person name="Amitai G."/>
            <person name="Sorek R."/>
            <person name="Kranzusch P.J."/>
        </authorList>
    </citation>
    <scope>FUNCTION</scope>
    <scope>PROBABLE ACTIVE SITE</scope>
    <scope>SUBSTRATE SPECIFICITY</scope>
    <scope>BIOPHYSICOCHEMICAL PROPERTIES</scope>
    <scope>MUTAGENESIS OF HIS-796 AND CYS-840</scope>
    <source>
        <strain>ATCC BAA-293 / DSM 19591 / LMG 21438 / NS12</strain>
    </source>
</reference>
<dbReference type="EC" id="3.4.21.-" evidence="2"/>
<dbReference type="EMBL" id="AUIF01000011">
    <property type="status" value="NOT_ANNOTATED_CDS"/>
    <property type="molecule type" value="Genomic_DNA"/>
</dbReference>
<dbReference type="RefSeq" id="WP_028664176.1">
    <property type="nucleotide sequence ID" value="NZ_AUIF01000011.1"/>
</dbReference>
<dbReference type="SMR" id="P0DV49"/>
<dbReference type="OrthoDB" id="1148122at2"/>
<dbReference type="GO" id="GO:0008236">
    <property type="term" value="F:serine-type peptidase activity"/>
    <property type="evidence" value="ECO:0007669"/>
    <property type="project" value="UniProtKB-KW"/>
</dbReference>
<dbReference type="GO" id="GO:0051607">
    <property type="term" value="P:defense response to virus"/>
    <property type="evidence" value="ECO:0007669"/>
    <property type="project" value="UniProtKB-KW"/>
</dbReference>
<dbReference type="GO" id="GO:0006508">
    <property type="term" value="P:proteolysis"/>
    <property type="evidence" value="ECO:0007669"/>
    <property type="project" value="UniProtKB-KW"/>
</dbReference>
<dbReference type="Gene3D" id="3.30.310.200">
    <property type="match status" value="1"/>
</dbReference>
<dbReference type="Gene3D" id="3.40.50.300">
    <property type="entry name" value="P-loop containing nucleotide triphosphate hydrolases"/>
    <property type="match status" value="1"/>
</dbReference>
<dbReference type="Gene3D" id="3.80.10.10">
    <property type="entry name" value="Ribonuclease Inhibitor"/>
    <property type="match status" value="1"/>
</dbReference>
<dbReference type="Gene3D" id="1.10.10.10">
    <property type="entry name" value="Winged helix-like DNA-binding domain superfamily/Winged helix DNA-binding domain"/>
    <property type="match status" value="1"/>
</dbReference>
<dbReference type="InterPro" id="IPR032171">
    <property type="entry name" value="COR-A"/>
</dbReference>
<dbReference type="InterPro" id="IPR032675">
    <property type="entry name" value="LRR_dom_sf"/>
</dbReference>
<dbReference type="InterPro" id="IPR027417">
    <property type="entry name" value="P-loop_NTPase"/>
</dbReference>
<dbReference type="InterPro" id="IPR036388">
    <property type="entry name" value="WH-like_DNA-bd_sf"/>
</dbReference>
<dbReference type="PANTHER" id="PTHR24366">
    <property type="entry name" value="IG(IMMUNOGLOBULIN) AND LRR(LEUCINE RICH REPEAT) DOMAINS"/>
    <property type="match status" value="1"/>
</dbReference>
<dbReference type="PANTHER" id="PTHR24366:SF96">
    <property type="entry name" value="LEUCINE RICH REPEAT CONTAINING 53"/>
    <property type="match status" value="1"/>
</dbReference>
<dbReference type="Pfam" id="PF16095">
    <property type="entry name" value="COR-A"/>
    <property type="match status" value="1"/>
</dbReference>
<dbReference type="Pfam" id="PF25497">
    <property type="entry name" value="COR-B"/>
    <property type="match status" value="1"/>
</dbReference>
<dbReference type="Pfam" id="PF08477">
    <property type="entry name" value="Roc"/>
    <property type="match status" value="1"/>
</dbReference>
<dbReference type="PRINTS" id="PR00449">
    <property type="entry name" value="RASTRNSFRMNG"/>
</dbReference>
<dbReference type="SUPFAM" id="SSF52058">
    <property type="entry name" value="L domain-like"/>
    <property type="match status" value="1"/>
</dbReference>
<dbReference type="SUPFAM" id="SSF52540">
    <property type="entry name" value="P-loop containing nucleoside triphosphate hydrolases"/>
    <property type="match status" value="1"/>
</dbReference>
<name>PROT_RUNZN</name>
<organism>
    <name type="scientific">Runella zeae (strain ATCC BAA-293 / DSM 19591 / LMG 21438 / NS12)</name>
    <dbReference type="NCBI Taxonomy" id="1123078"/>
    <lineage>
        <taxon>Bacteria</taxon>
        <taxon>Pseudomonadati</taxon>
        <taxon>Bacteroidota</taxon>
        <taxon>Cytophagia</taxon>
        <taxon>Cytophagales</taxon>
        <taxon>Spirosomataceae</taxon>
        <taxon>Runella</taxon>
    </lineage>
</organism>
<comment type="function">
    <text evidence="2 5">A dedicated protease for gasdermin bGSDM; cleaves the bGSDM precursor, releasing the pore-forming moiety, which integrates into the membrane and triggers cell death (PubMed:35025633). Probably involved in defense against bacteriophages (Probable). Expression of bGSDM and this neighboring protease is highly toxic in E.coli. Cells expressing the gene pair stop dividing and lose membrane integrity. Both proteins are required to kill E.coli. The bGSDM recognition site is larger than the 8 residues surrounding the cleavage site; replacement of the endogenous recognition site by the Runella site (NRVLGENM) in a number of other bGSDMs is not sufficient for them to be cleaved (PubMed:35025633).</text>
</comment>
<comment type="biophysicochemical properties">
    <phDependence>
        <text evidence="2">Optimum pH is 8.4 to 10.2.</text>
    </phDependence>
</comment>
<proteinExistence type="evidence at protein level"/>
<protein>
    <recommendedName>
        <fullName evidence="3">Roc-COR-CHAT protease</fullName>
        <ecNumber evidence="2">3.4.21.-</ecNumber>
    </recommendedName>
    <alternativeName>
        <fullName evidence="4">Protease G563DRAFT_02009</fullName>
    </alternativeName>
</protein>
<accession>P0DV49</accession>